<comment type="function">
    <text evidence="1">Catalyzes the reversible isomerization of glucose-6-phosphate to fructose-6-phosphate.</text>
</comment>
<comment type="catalytic activity">
    <reaction evidence="1">
        <text>alpha-D-glucose 6-phosphate = beta-D-fructose 6-phosphate</text>
        <dbReference type="Rhea" id="RHEA:11816"/>
        <dbReference type="ChEBI" id="CHEBI:57634"/>
        <dbReference type="ChEBI" id="CHEBI:58225"/>
        <dbReference type="EC" id="5.3.1.9"/>
    </reaction>
</comment>
<comment type="pathway">
    <text evidence="1">Carbohydrate biosynthesis; gluconeogenesis.</text>
</comment>
<comment type="pathway">
    <text evidence="1">Carbohydrate degradation; glycolysis; D-glyceraldehyde 3-phosphate and glycerone phosphate from D-glucose: step 2/4.</text>
</comment>
<comment type="subcellular location">
    <subcellularLocation>
        <location evidence="1">Cytoplasm</location>
    </subcellularLocation>
</comment>
<comment type="similarity">
    <text evidence="1">Belongs to the GPI family.</text>
</comment>
<proteinExistence type="inferred from homology"/>
<sequence length="430" mass="45583">MQVDLGTVFDATPGVTQDGLERLDERVATAHERIERGRRNNEPGYAALNLPETVDTTTIHDAVASFEDPTAILIVGIGGSALGAATLVDALGDDTAPSVYVLDNVDPASISRILESIPLSETVLNVVSRSGTTAETLSNFLVVREAMTKAGVDWTDRTIVTTGTDGNLRQLAKSESLPALSVPEGVPGRFSVLSTVGLVVAALKGIQISELITGAADAAAELSGSLFETPAYAYGATTYALATRGARTNVMMPYAENLETFAEWFAQLWAESLGKDNRGQTPIRALGATDQHSQLQLYRAGPHNKVITLIRPRNRPSCTIPSTDLDGLSYLGGSDLGSLLDAEFEATEASLVDADIPTIRVEINAIDAQSLGALLYEFEVACICYGELASVPTFTQPAVEWGKRAARGLLGDDKFMEAAAVADKPTLRVE</sequence>
<accession>Q18FQ4</accession>
<organism>
    <name type="scientific">Haloquadratum walsbyi (strain DSM 16790 / HBSQ001)</name>
    <dbReference type="NCBI Taxonomy" id="362976"/>
    <lineage>
        <taxon>Archaea</taxon>
        <taxon>Methanobacteriati</taxon>
        <taxon>Methanobacteriota</taxon>
        <taxon>Stenosarchaea group</taxon>
        <taxon>Halobacteria</taxon>
        <taxon>Halobacteriales</taxon>
        <taxon>Haloferacaceae</taxon>
        <taxon>Haloquadratum</taxon>
    </lineage>
</organism>
<evidence type="ECO:0000255" key="1">
    <source>
        <dbReference type="HAMAP-Rule" id="MF_00473"/>
    </source>
</evidence>
<feature type="chain" id="PRO_0000252605" description="Probable glucose-6-phosphate isomerase">
    <location>
        <begin position="1"/>
        <end position="430"/>
    </location>
</feature>
<feature type="active site" description="Proton donor" evidence="1">
    <location>
        <position position="271"/>
    </location>
</feature>
<feature type="active site" evidence="1">
    <location>
        <position position="292"/>
    </location>
</feature>
<feature type="active site" evidence="1">
    <location>
        <position position="303"/>
    </location>
</feature>
<feature type="active site" evidence="1">
    <location>
        <position position="403"/>
    </location>
</feature>
<reference key="1">
    <citation type="journal article" date="2006" name="BMC Genomics">
        <title>The genome of the square archaeon Haloquadratum walsbyi: life at the limits of water activity.</title>
        <authorList>
            <person name="Bolhuis H."/>
            <person name="Palm P."/>
            <person name="Wende A."/>
            <person name="Falb M."/>
            <person name="Rampp M."/>
            <person name="Rodriguez-Valera F."/>
            <person name="Pfeiffer F."/>
            <person name="Oesterhelt D."/>
        </authorList>
    </citation>
    <scope>NUCLEOTIDE SEQUENCE [LARGE SCALE GENOMIC DNA]</scope>
    <source>
        <strain>DSM 16790 / HBSQ001</strain>
    </source>
</reference>
<protein>
    <recommendedName>
        <fullName evidence="1">Probable glucose-6-phosphate isomerase</fullName>
        <shortName evidence="1">GPI</shortName>
        <ecNumber evidence="1">5.3.1.9</ecNumber>
    </recommendedName>
    <alternativeName>
        <fullName evidence="1">Phosphoglucose isomerase</fullName>
        <shortName evidence="1">PGI</shortName>
    </alternativeName>
    <alternativeName>
        <fullName evidence="1">Phosphohexose isomerase</fullName>
        <shortName evidence="1">PHI</shortName>
    </alternativeName>
</protein>
<name>G6PI_HALWD</name>
<dbReference type="EC" id="5.3.1.9" evidence="1"/>
<dbReference type="EMBL" id="AM180088">
    <property type="protein sequence ID" value="CAJ53201.1"/>
    <property type="molecule type" value="Genomic_DNA"/>
</dbReference>
<dbReference type="RefSeq" id="WP_011572308.1">
    <property type="nucleotide sequence ID" value="NC_008212.1"/>
</dbReference>
<dbReference type="SMR" id="Q18FQ4"/>
<dbReference type="STRING" id="362976.HQ_3101A"/>
<dbReference type="GeneID" id="4194427"/>
<dbReference type="KEGG" id="hwa:HQ_3101A"/>
<dbReference type="eggNOG" id="arCOG00052">
    <property type="taxonomic scope" value="Archaea"/>
</dbReference>
<dbReference type="HOGENOM" id="CLU_037303_1_0_2"/>
<dbReference type="UniPathway" id="UPA00109">
    <property type="reaction ID" value="UER00181"/>
</dbReference>
<dbReference type="UniPathway" id="UPA00138"/>
<dbReference type="Proteomes" id="UP000001975">
    <property type="component" value="Chromosome"/>
</dbReference>
<dbReference type="GO" id="GO:0005829">
    <property type="term" value="C:cytosol"/>
    <property type="evidence" value="ECO:0007669"/>
    <property type="project" value="TreeGrafter"/>
</dbReference>
<dbReference type="GO" id="GO:0097367">
    <property type="term" value="F:carbohydrate derivative binding"/>
    <property type="evidence" value="ECO:0007669"/>
    <property type="project" value="InterPro"/>
</dbReference>
<dbReference type="GO" id="GO:0004347">
    <property type="term" value="F:glucose-6-phosphate isomerase activity"/>
    <property type="evidence" value="ECO:0007669"/>
    <property type="project" value="UniProtKB-UniRule"/>
</dbReference>
<dbReference type="GO" id="GO:0048029">
    <property type="term" value="F:monosaccharide binding"/>
    <property type="evidence" value="ECO:0007669"/>
    <property type="project" value="TreeGrafter"/>
</dbReference>
<dbReference type="GO" id="GO:0006094">
    <property type="term" value="P:gluconeogenesis"/>
    <property type="evidence" value="ECO:0007669"/>
    <property type="project" value="UniProtKB-UniRule"/>
</dbReference>
<dbReference type="GO" id="GO:0051156">
    <property type="term" value="P:glucose 6-phosphate metabolic process"/>
    <property type="evidence" value="ECO:0007669"/>
    <property type="project" value="TreeGrafter"/>
</dbReference>
<dbReference type="GO" id="GO:0006096">
    <property type="term" value="P:glycolytic process"/>
    <property type="evidence" value="ECO:0007669"/>
    <property type="project" value="UniProtKB-UniRule"/>
</dbReference>
<dbReference type="CDD" id="cd05015">
    <property type="entry name" value="SIS_PGI_1"/>
    <property type="match status" value="1"/>
</dbReference>
<dbReference type="CDD" id="cd05016">
    <property type="entry name" value="SIS_PGI_2"/>
    <property type="match status" value="1"/>
</dbReference>
<dbReference type="Gene3D" id="3.40.50.10490">
    <property type="entry name" value="Glucose-6-phosphate isomerase like protein, domain 1"/>
    <property type="match status" value="2"/>
</dbReference>
<dbReference type="HAMAP" id="MF_00473">
    <property type="entry name" value="G6P_isomerase"/>
    <property type="match status" value="1"/>
</dbReference>
<dbReference type="InterPro" id="IPR001672">
    <property type="entry name" value="G6P_Isomerase"/>
</dbReference>
<dbReference type="InterPro" id="IPR018189">
    <property type="entry name" value="Phosphoglucose_isomerase_CS"/>
</dbReference>
<dbReference type="InterPro" id="IPR001347">
    <property type="entry name" value="SIS_dom"/>
</dbReference>
<dbReference type="InterPro" id="IPR046348">
    <property type="entry name" value="SIS_dom_sf"/>
</dbReference>
<dbReference type="InterPro" id="IPR035476">
    <property type="entry name" value="SIS_PGI_1"/>
</dbReference>
<dbReference type="InterPro" id="IPR035482">
    <property type="entry name" value="SIS_PGI_2"/>
</dbReference>
<dbReference type="PANTHER" id="PTHR11469">
    <property type="entry name" value="GLUCOSE-6-PHOSPHATE ISOMERASE"/>
    <property type="match status" value="1"/>
</dbReference>
<dbReference type="PANTHER" id="PTHR11469:SF1">
    <property type="entry name" value="GLUCOSE-6-PHOSPHATE ISOMERASE"/>
    <property type="match status" value="1"/>
</dbReference>
<dbReference type="Pfam" id="PF00342">
    <property type="entry name" value="PGI"/>
    <property type="match status" value="1"/>
</dbReference>
<dbReference type="PRINTS" id="PR00662">
    <property type="entry name" value="G6PISOMERASE"/>
</dbReference>
<dbReference type="SUPFAM" id="SSF53697">
    <property type="entry name" value="SIS domain"/>
    <property type="match status" value="1"/>
</dbReference>
<dbReference type="PROSITE" id="PS00765">
    <property type="entry name" value="P_GLUCOSE_ISOMERASE_1"/>
    <property type="match status" value="1"/>
</dbReference>
<dbReference type="PROSITE" id="PS51463">
    <property type="entry name" value="P_GLUCOSE_ISOMERASE_3"/>
    <property type="match status" value="1"/>
</dbReference>
<keyword id="KW-0963">Cytoplasm</keyword>
<keyword id="KW-0312">Gluconeogenesis</keyword>
<keyword id="KW-0324">Glycolysis</keyword>
<keyword id="KW-0413">Isomerase</keyword>
<keyword id="KW-1185">Reference proteome</keyword>
<gene>
    <name evidence="1" type="primary">pgi</name>
    <name type="ordered locus">HQ_3101A</name>
</gene>